<protein>
    <recommendedName>
        <fullName evidence="4">Neurotrophic factor BDNF precursor form</fullName>
        <shortName>proBDNF</shortName>
    </recommendedName>
    <alternativeName>
        <fullName>Brain-derived neurotrophic factor</fullName>
    </alternativeName>
    <component>
        <recommendedName>
            <fullName>Neurotrophic factor BDNF</fullName>
        </recommendedName>
    </component>
</protein>
<organism>
    <name type="scientific">Procyon lotor</name>
    <name type="common">Raccoon</name>
    <dbReference type="NCBI Taxonomy" id="9654"/>
    <lineage>
        <taxon>Eukaryota</taxon>
        <taxon>Metazoa</taxon>
        <taxon>Chordata</taxon>
        <taxon>Craniata</taxon>
        <taxon>Vertebrata</taxon>
        <taxon>Euteleostomi</taxon>
        <taxon>Mammalia</taxon>
        <taxon>Eutheria</taxon>
        <taxon>Laurasiatheria</taxon>
        <taxon>Carnivora</taxon>
        <taxon>Caniformia</taxon>
        <taxon>Musteloidea</taxon>
        <taxon>Procyonidae</taxon>
        <taxon>Procyon</taxon>
    </lineage>
</organism>
<name>BDNF_PROLO</name>
<evidence type="ECO:0000250" key="1">
    <source>
        <dbReference type="UniProtKB" id="P21237"/>
    </source>
</evidence>
<evidence type="ECO:0000250" key="2">
    <source>
        <dbReference type="UniProtKB" id="P23560"/>
    </source>
</evidence>
<evidence type="ECO:0000255" key="3"/>
<evidence type="ECO:0000305" key="4"/>
<feature type="signal peptide" evidence="3">
    <location>
        <begin position="1"/>
        <end position="18"/>
    </location>
</feature>
<feature type="chain" id="PRO_0000447539" description="Neurotrophic factor BDNF precursor form">
    <location>
        <begin position="19"/>
        <end position="247"/>
    </location>
</feature>
<feature type="propeptide" id="PRO_0000019641" evidence="1">
    <location>
        <begin position="19"/>
        <end position="128"/>
    </location>
</feature>
<feature type="chain" id="PRO_0000019642" description="Neurotrophic factor BDNF">
    <location>
        <begin position="129"/>
        <end position="247"/>
    </location>
</feature>
<feature type="site" description="Cleavage; by MBTPS1" evidence="2">
    <location>
        <begin position="57"/>
        <end position="58"/>
    </location>
</feature>
<feature type="glycosylation site" description="N-linked (GlcNAc...) asparagine" evidence="3">
    <location>
        <position position="121"/>
    </location>
</feature>
<feature type="disulfide bond" evidence="2">
    <location>
        <begin position="141"/>
        <end position="208"/>
    </location>
</feature>
<feature type="disulfide bond" evidence="2">
    <location>
        <begin position="186"/>
        <end position="237"/>
    </location>
</feature>
<feature type="disulfide bond" evidence="2">
    <location>
        <begin position="196"/>
        <end position="239"/>
    </location>
</feature>
<comment type="function">
    <text evidence="1 2">Important signaling molecule that activates signaling cascades downstream of NTRK2 (By similarity). During development, promotes the survival and differentiation of selected neuronal populations of the peripheral and central nervous systems. Participates in axonal growth, pathfinding and in the modulation of dendritic growth and morphology. Major regulator of synaptic transmission and plasticity at adult synapses in many regions of the CNS. The versatility of BDNF is emphasized by its contribution to a range of adaptive neuronal responses including long-term potentiation (LTP), long-term depression (LTD), certain forms of short-term synaptic plasticity, as well as homeostatic regulation of intrinsic neuronal excitability (By similarity).</text>
</comment>
<comment type="function">
    <molecule>Neurotrophic factor BDNF precursor form</molecule>
    <text evidence="1">Important signaling molecule that activates signaling cascades downstream of NTRK2. Activates signaling cascades via the heterodimeric receptor formed by NGFR and SORCS2. Signaling via NGFR and SORCS2 plays a role in synaptic plasticity and long-term depression (LTD). Binding to NGFR and SORCS2 promotes neuronal apoptosis. Promotes neuronal growth cone collapse.</text>
</comment>
<comment type="subunit">
    <text evidence="1 2">Monomers and homodimers (By similarity). Binds to NTRK2/TRKB. Can form heterodimers with other neurotrophin family members, such as NTF3 and NTF4 (in vitro), but the physiological relevance of this is not clear (By similarity). BDNF precursor form: interacts with the heterodimer formed by NGFR and SORCS2. Mature BDNF has much lower affinity for the heterodimer formed by NGFR and SORCS2 (By similarity).</text>
</comment>
<comment type="subcellular location">
    <subcellularLocation>
        <location evidence="2">Secreted</location>
    </subcellularLocation>
</comment>
<comment type="subcellular location">
    <molecule>Neurotrophic factor BDNF precursor form</molecule>
    <subcellularLocation>
        <location evidence="2">Secreted</location>
    </subcellularLocation>
    <text evidence="2">A proportion of BDNF is secreted as immature precursor (proBDNF).</text>
</comment>
<comment type="PTM">
    <molecule>Neurotrophic factor BDNF precursor form</molecule>
    <text evidence="2">N-glycosylated and glycosulfated, contrary to mature BDNF.</text>
</comment>
<comment type="PTM">
    <text evidence="2">Mature BDNF is produced by proteolytic removal of the propeptide, catalyzed by a FURIN family member. In addition, the precursor form is proteolytically cleaved within the propeptide, but this is not an obligatory intermediate for the production of mature BDNF. Can be converted into mature BDNF by plasmin (PLG).</text>
</comment>
<comment type="similarity">
    <text evidence="4">Belongs to the NGF-beta family.</text>
</comment>
<keyword id="KW-0165">Cleavage on pair of basic residues</keyword>
<keyword id="KW-1015">Disulfide bond</keyword>
<keyword id="KW-0325">Glycoprotein</keyword>
<keyword id="KW-0339">Growth factor</keyword>
<keyword id="KW-0964">Secreted</keyword>
<keyword id="KW-0732">Signal</keyword>
<proteinExistence type="inferred from homology"/>
<reference key="1">
    <citation type="submission" date="1997-05" db="EMBL/GenBank/DDBJ databases">
        <authorList>
            <person name="Lin F."/>
        </authorList>
    </citation>
    <scope>NUCLEOTIDE SEQUENCE [GENOMIC DNA]</scope>
</reference>
<sequence>MTILFLTMVISYFGCMKAAPMKEANVRGQGSLAYPGVRTHGTLESVNGPKAGSRGLTSLADTFEHVIEELLDEDQKVRPNEENNKDADLYTSRVMLSSQVPLEPPLLFLLEEYKNYLDAANMSMRVRRHSDPARRGELSVCDSISEWVTAADKKTAVDMSGGTVTVLEKVPVSKGQLKQYFYETKCNPMGYTKEGCRGIDKRHWNSQCRTTQSYVRALTMDSKKRIGWRFIRIDTSCVCTLTIKRGR</sequence>
<dbReference type="EMBL" id="AF003188">
    <property type="protein sequence ID" value="AAB71654.1"/>
    <property type="molecule type" value="Genomic_DNA"/>
</dbReference>
<dbReference type="BMRB" id="O18755"/>
<dbReference type="SMR" id="O18755"/>
<dbReference type="GlyCosmos" id="O18755">
    <property type="glycosylation" value="1 site, No reported glycans"/>
</dbReference>
<dbReference type="GO" id="GO:0030424">
    <property type="term" value="C:axon"/>
    <property type="evidence" value="ECO:0007669"/>
    <property type="project" value="TreeGrafter"/>
</dbReference>
<dbReference type="GO" id="GO:0030425">
    <property type="term" value="C:dendrite"/>
    <property type="evidence" value="ECO:0007669"/>
    <property type="project" value="TreeGrafter"/>
</dbReference>
<dbReference type="GO" id="GO:0005615">
    <property type="term" value="C:extracellular space"/>
    <property type="evidence" value="ECO:0007669"/>
    <property type="project" value="TreeGrafter"/>
</dbReference>
<dbReference type="GO" id="GO:0008021">
    <property type="term" value="C:synaptic vesicle"/>
    <property type="evidence" value="ECO:0007669"/>
    <property type="project" value="TreeGrafter"/>
</dbReference>
<dbReference type="GO" id="GO:0008083">
    <property type="term" value="F:growth factor activity"/>
    <property type="evidence" value="ECO:0007669"/>
    <property type="project" value="UniProtKB-KW"/>
</dbReference>
<dbReference type="GO" id="GO:0005163">
    <property type="term" value="F:nerve growth factor receptor binding"/>
    <property type="evidence" value="ECO:0007669"/>
    <property type="project" value="TreeGrafter"/>
</dbReference>
<dbReference type="GO" id="GO:0007169">
    <property type="term" value="P:cell surface receptor protein tyrosine kinase signaling pathway"/>
    <property type="evidence" value="ECO:0007669"/>
    <property type="project" value="TreeGrafter"/>
</dbReference>
<dbReference type="GO" id="GO:0050804">
    <property type="term" value="P:modulation of chemical synaptic transmission"/>
    <property type="evidence" value="ECO:0007669"/>
    <property type="project" value="TreeGrafter"/>
</dbReference>
<dbReference type="GO" id="GO:0043524">
    <property type="term" value="P:negative regulation of neuron apoptotic process"/>
    <property type="evidence" value="ECO:0007669"/>
    <property type="project" value="TreeGrafter"/>
</dbReference>
<dbReference type="GO" id="GO:0021675">
    <property type="term" value="P:nerve development"/>
    <property type="evidence" value="ECO:0007669"/>
    <property type="project" value="TreeGrafter"/>
</dbReference>
<dbReference type="GO" id="GO:0038180">
    <property type="term" value="P:nerve growth factor signaling pathway"/>
    <property type="evidence" value="ECO:0007669"/>
    <property type="project" value="TreeGrafter"/>
</dbReference>
<dbReference type="GO" id="GO:0048812">
    <property type="term" value="P:neuron projection morphogenesis"/>
    <property type="evidence" value="ECO:0007669"/>
    <property type="project" value="TreeGrafter"/>
</dbReference>
<dbReference type="FunFam" id="2.10.90.10:FF:000002">
    <property type="entry name" value="Brain-derived neurotrophic factor"/>
    <property type="match status" value="1"/>
</dbReference>
<dbReference type="Gene3D" id="2.10.90.10">
    <property type="entry name" value="Cystine-knot cytokines"/>
    <property type="match status" value="1"/>
</dbReference>
<dbReference type="InterPro" id="IPR020430">
    <property type="entry name" value="Brain-der_neurotrophic_factor"/>
</dbReference>
<dbReference type="InterPro" id="IPR029034">
    <property type="entry name" value="Cystine-knot_cytokine"/>
</dbReference>
<dbReference type="InterPro" id="IPR020408">
    <property type="entry name" value="Nerve_growth_factor-like"/>
</dbReference>
<dbReference type="InterPro" id="IPR002072">
    <property type="entry name" value="Nerve_growth_factor-rel"/>
</dbReference>
<dbReference type="InterPro" id="IPR019846">
    <property type="entry name" value="Nerve_growth_factor_CS"/>
</dbReference>
<dbReference type="PANTHER" id="PTHR11589:SF3">
    <property type="entry name" value="BRAIN-DERIVED NEUROTROPHIC FACTOR"/>
    <property type="match status" value="1"/>
</dbReference>
<dbReference type="PANTHER" id="PTHR11589">
    <property type="entry name" value="NERVE GROWTH FACTOR NGF -RELATED"/>
    <property type="match status" value="1"/>
</dbReference>
<dbReference type="Pfam" id="PF00243">
    <property type="entry name" value="NGF"/>
    <property type="match status" value="1"/>
</dbReference>
<dbReference type="PIRSF" id="PIRSF001789">
    <property type="entry name" value="NGF"/>
    <property type="match status" value="1"/>
</dbReference>
<dbReference type="PRINTS" id="PR01912">
    <property type="entry name" value="BDNFACTOR"/>
</dbReference>
<dbReference type="PRINTS" id="PR00268">
    <property type="entry name" value="NGF"/>
</dbReference>
<dbReference type="SMART" id="SM00140">
    <property type="entry name" value="NGF"/>
    <property type="match status" value="1"/>
</dbReference>
<dbReference type="SUPFAM" id="SSF57501">
    <property type="entry name" value="Cystine-knot cytokines"/>
    <property type="match status" value="1"/>
</dbReference>
<dbReference type="PROSITE" id="PS00248">
    <property type="entry name" value="NGF_1"/>
    <property type="match status" value="1"/>
</dbReference>
<dbReference type="PROSITE" id="PS50270">
    <property type="entry name" value="NGF_2"/>
    <property type="match status" value="1"/>
</dbReference>
<gene>
    <name type="primary">BDNF</name>
</gene>
<accession>O18755</accession>